<feature type="initiator methionine" description="Removed" evidence="5">
    <location>
        <position position="1"/>
    </location>
</feature>
<feature type="chain" id="PRO_0000155032" description="Elongation factor 1-beta 2">
    <location>
        <begin position="2"/>
        <end position="224"/>
    </location>
</feature>
<feature type="domain" description="GST C-terminal">
    <location>
        <begin position="14"/>
        <end position="65"/>
    </location>
</feature>
<feature type="region of interest" description="Disordered" evidence="2">
    <location>
        <begin position="89"/>
        <end position="139"/>
    </location>
</feature>
<feature type="compositionally biased region" description="Acidic residues" evidence="2">
    <location>
        <begin position="97"/>
        <end position="111"/>
    </location>
</feature>
<feature type="compositionally biased region" description="Basic and acidic residues" evidence="2">
    <location>
        <begin position="112"/>
        <end position="134"/>
    </location>
</feature>
<feature type="modified residue" description="N-acetylalanine" evidence="5">
    <location>
        <position position="2"/>
    </location>
</feature>
<evidence type="ECO:0000250" key="1"/>
<evidence type="ECO:0000256" key="2">
    <source>
        <dbReference type="SAM" id="MobiDB-lite"/>
    </source>
</evidence>
<evidence type="ECO:0000269" key="3">
    <source>
    </source>
</evidence>
<evidence type="ECO:0000305" key="4"/>
<evidence type="ECO:0007744" key="5">
    <source>
    </source>
</evidence>
<comment type="function">
    <text evidence="3">EF-1-beta and EF-1-delta stimulate the exchange of GDP bound to EF-1-alpha to GTP.</text>
</comment>
<comment type="subunit">
    <text evidence="1">EF-1 is composed of 4 subunits: alpha, beta (1B-alpha=beta'), delta (1B-beta), and gamma (1B-gamma).</text>
</comment>
<comment type="similarity">
    <text evidence="4">Belongs to the EF-1-beta/EF-1-delta family.</text>
</comment>
<dbReference type="EMBL" id="AJ249597">
    <property type="protein sequence ID" value="CAB64730.1"/>
    <property type="molecule type" value="mRNA"/>
</dbReference>
<dbReference type="EMBL" id="AF296830">
    <property type="status" value="NOT_ANNOTATED_CDS"/>
    <property type="molecule type" value="Genomic_DNA"/>
</dbReference>
<dbReference type="EMBL" id="CP002688">
    <property type="protein sequence ID" value="AED92719.1"/>
    <property type="molecule type" value="Genomic_DNA"/>
</dbReference>
<dbReference type="EMBL" id="AF360304">
    <property type="protein sequence ID" value="AAK26014.1"/>
    <property type="molecule type" value="mRNA"/>
</dbReference>
<dbReference type="EMBL" id="AY056354">
    <property type="protein sequence ID" value="AAL07240.1"/>
    <property type="molecule type" value="mRNA"/>
</dbReference>
<dbReference type="PIR" id="PA0110">
    <property type="entry name" value="PA0110"/>
</dbReference>
<dbReference type="PIR" id="T52558">
    <property type="entry name" value="T52558"/>
</dbReference>
<dbReference type="RefSeq" id="NP_568375.2">
    <property type="nucleotide sequence ID" value="NM_121956.3"/>
</dbReference>
<dbReference type="SMR" id="Q9SCX3"/>
<dbReference type="BioGRID" id="17347">
    <property type="interactions" value="6"/>
</dbReference>
<dbReference type="FunCoup" id="Q9SCX3">
    <property type="interactions" value="3634"/>
</dbReference>
<dbReference type="STRING" id="3702.Q9SCX3"/>
<dbReference type="iPTMnet" id="Q9SCX3"/>
<dbReference type="MetOSite" id="Q9SCX3"/>
<dbReference type="PaxDb" id="3702-AT5G19510.1"/>
<dbReference type="ProteomicsDB" id="221915"/>
<dbReference type="EnsemblPlants" id="AT5G19510.1">
    <property type="protein sequence ID" value="AT5G19510.1"/>
    <property type="gene ID" value="AT5G19510"/>
</dbReference>
<dbReference type="GeneID" id="832071"/>
<dbReference type="Gramene" id="AT5G19510.1">
    <property type="protein sequence ID" value="AT5G19510.1"/>
    <property type="gene ID" value="AT5G19510"/>
</dbReference>
<dbReference type="KEGG" id="ath:AT5G19510"/>
<dbReference type="Araport" id="AT5G19510"/>
<dbReference type="TAIR" id="AT5G19510"/>
<dbReference type="eggNOG" id="KOG1668">
    <property type="taxonomic scope" value="Eukaryota"/>
</dbReference>
<dbReference type="HOGENOM" id="CLU_050172_3_0_1"/>
<dbReference type="InParanoid" id="Q9SCX3"/>
<dbReference type="OMA" id="YRWYKHI"/>
<dbReference type="OrthoDB" id="331763at2759"/>
<dbReference type="PhylomeDB" id="Q9SCX3"/>
<dbReference type="CD-CODE" id="4299E36E">
    <property type="entry name" value="Nucleolus"/>
</dbReference>
<dbReference type="PRO" id="PR:Q9SCX3"/>
<dbReference type="Proteomes" id="UP000006548">
    <property type="component" value="Chromosome 5"/>
</dbReference>
<dbReference type="ExpressionAtlas" id="Q9SCX3">
    <property type="expression patterns" value="baseline and differential"/>
</dbReference>
<dbReference type="GO" id="GO:0048046">
    <property type="term" value="C:apoplast"/>
    <property type="evidence" value="ECO:0007005"/>
    <property type="project" value="TAIR"/>
</dbReference>
<dbReference type="GO" id="GO:0005829">
    <property type="term" value="C:cytosol"/>
    <property type="evidence" value="ECO:0007005"/>
    <property type="project" value="TAIR"/>
</dbReference>
<dbReference type="GO" id="GO:0005853">
    <property type="term" value="C:eukaryotic translation elongation factor 1 complex"/>
    <property type="evidence" value="ECO:0007669"/>
    <property type="project" value="InterPro"/>
</dbReference>
<dbReference type="GO" id="GO:0009506">
    <property type="term" value="C:plasmodesma"/>
    <property type="evidence" value="ECO:0007005"/>
    <property type="project" value="TAIR"/>
</dbReference>
<dbReference type="GO" id="GO:0009536">
    <property type="term" value="C:plastid"/>
    <property type="evidence" value="ECO:0007005"/>
    <property type="project" value="TAIR"/>
</dbReference>
<dbReference type="GO" id="GO:0005773">
    <property type="term" value="C:vacuole"/>
    <property type="evidence" value="ECO:0007005"/>
    <property type="project" value="TAIR"/>
</dbReference>
<dbReference type="GO" id="GO:0003746">
    <property type="term" value="F:translation elongation factor activity"/>
    <property type="evidence" value="ECO:0007669"/>
    <property type="project" value="UniProtKB-KW"/>
</dbReference>
<dbReference type="CDD" id="cd00292">
    <property type="entry name" value="EF1B"/>
    <property type="match status" value="1"/>
</dbReference>
<dbReference type="FunFam" id="3.30.70.60:FF:000001">
    <property type="entry name" value="Elongation factor 1-beta 1 like"/>
    <property type="match status" value="1"/>
</dbReference>
<dbReference type="Gene3D" id="1.20.1050.130">
    <property type="match status" value="1"/>
</dbReference>
<dbReference type="Gene3D" id="3.30.70.60">
    <property type="match status" value="1"/>
</dbReference>
<dbReference type="InterPro" id="IPR036219">
    <property type="entry name" value="eEF-1beta-like_sf"/>
</dbReference>
<dbReference type="InterPro" id="IPR049720">
    <property type="entry name" value="EF1B_bsu/dsu"/>
</dbReference>
<dbReference type="InterPro" id="IPR014038">
    <property type="entry name" value="EF1B_bsu/dsu_GNE"/>
</dbReference>
<dbReference type="InterPro" id="IPR036282">
    <property type="entry name" value="Glutathione-S-Trfase_C_sf"/>
</dbReference>
<dbReference type="InterPro" id="IPR014717">
    <property type="entry name" value="Transl_elong_EF1B/ribsomal_bS6"/>
</dbReference>
<dbReference type="InterPro" id="IPR001326">
    <property type="entry name" value="Transl_elong_EF1B_B/D_CS"/>
</dbReference>
<dbReference type="PANTHER" id="PTHR11595">
    <property type="entry name" value="EF-HAND AND COILED-COIL DOMAIN-CONTAINING FAMILY MEMBER"/>
    <property type="match status" value="1"/>
</dbReference>
<dbReference type="PANTHER" id="PTHR11595:SF66">
    <property type="entry name" value="ELONGATION FACTOR 1-BETA 2"/>
    <property type="match status" value="1"/>
</dbReference>
<dbReference type="Pfam" id="PF00736">
    <property type="entry name" value="EF1_GNE"/>
    <property type="match status" value="1"/>
</dbReference>
<dbReference type="SMART" id="SM00888">
    <property type="entry name" value="EF1_GNE"/>
    <property type="match status" value="1"/>
</dbReference>
<dbReference type="SUPFAM" id="SSF54984">
    <property type="entry name" value="eEF-1beta-like"/>
    <property type="match status" value="1"/>
</dbReference>
<dbReference type="SUPFAM" id="SSF47616">
    <property type="entry name" value="GST C-terminal domain-like"/>
    <property type="match status" value="1"/>
</dbReference>
<dbReference type="PROSITE" id="PS00824">
    <property type="entry name" value="EF1BD_1"/>
    <property type="match status" value="1"/>
</dbReference>
<dbReference type="PROSITE" id="PS00825">
    <property type="entry name" value="EF1BD_2"/>
    <property type="match status" value="1"/>
</dbReference>
<keyword id="KW-0007">Acetylation</keyword>
<keyword id="KW-0251">Elongation factor</keyword>
<keyword id="KW-0648">Protein biosynthesis</keyword>
<keyword id="KW-1185">Reference proteome</keyword>
<proteinExistence type="evidence at protein level"/>
<protein>
    <recommendedName>
        <fullName>Elongation factor 1-beta 2</fullName>
        <shortName>EF-1-beta 2</shortName>
    </recommendedName>
    <alternativeName>
        <fullName>Elongation factor 1-beta' 2</fullName>
        <shortName>EF-1-beta' 2</shortName>
    </alternativeName>
    <alternativeName>
        <fullName>Elongation factor 1B-alpha 2</fullName>
    </alternativeName>
    <alternativeName>
        <fullName>eEF-1B alpha 2</fullName>
    </alternativeName>
</protein>
<sequence>MAVTFSDLHTEEGVKSVEEHLAGKTYISGDQLSVDDVKVYAAVPVKPSDAFPNASKWYESVASQLAKSFPGKAVGVQFGGSAAAAPAVEAEAPAAAADDDDDMDLFGDETEEEKKAAEEREAAKKDTKKPKESGKSSVLMDVKPWDDETDMKKLEEAVRGVEMPGLFWGASKLVPVGYGIKKLTIMFTIVDDLVSPDNLIEDFLTSEPNNEYIQSCDIVAFNKI</sequence>
<gene>
    <name type="ordered locus">At5g19510</name>
    <name type="ORF">T20D1.30</name>
</gene>
<organism>
    <name type="scientific">Arabidopsis thaliana</name>
    <name type="common">Mouse-ear cress</name>
    <dbReference type="NCBI Taxonomy" id="3702"/>
    <lineage>
        <taxon>Eukaryota</taxon>
        <taxon>Viridiplantae</taxon>
        <taxon>Streptophyta</taxon>
        <taxon>Embryophyta</taxon>
        <taxon>Tracheophyta</taxon>
        <taxon>Spermatophyta</taxon>
        <taxon>Magnoliopsida</taxon>
        <taxon>eudicotyledons</taxon>
        <taxon>Gunneridae</taxon>
        <taxon>Pentapetalae</taxon>
        <taxon>rosids</taxon>
        <taxon>malvids</taxon>
        <taxon>Brassicales</taxon>
        <taxon>Brassicaceae</taxon>
        <taxon>Camelineae</taxon>
        <taxon>Arabidopsis</taxon>
    </lineage>
</organism>
<name>EF1B2_ARATH</name>
<reference key="1">
    <citation type="journal article" date="1999" name="FEBS Lett.">
        <title>Molecular cloning and characterization of the Arabidopsis thaliana alpha-subunit of elongation factor 1B.</title>
        <authorList>
            <person name="Hericourt F."/>
            <person name="Jupin I."/>
        </authorList>
    </citation>
    <scope>NUCLEOTIDE SEQUENCE [MRNA]</scope>
    <scope>FUNCTION</scope>
</reference>
<reference key="2">
    <citation type="journal article" date="2000" name="Nature">
        <title>Sequence and analysis of chromosome 5 of the plant Arabidopsis thaliana.</title>
        <authorList>
            <person name="Tabata S."/>
            <person name="Kaneko T."/>
            <person name="Nakamura Y."/>
            <person name="Kotani H."/>
            <person name="Kato T."/>
            <person name="Asamizu E."/>
            <person name="Miyajima N."/>
            <person name="Sasamoto S."/>
            <person name="Kimura T."/>
            <person name="Hosouchi T."/>
            <person name="Kawashima K."/>
            <person name="Kohara M."/>
            <person name="Matsumoto M."/>
            <person name="Matsuno A."/>
            <person name="Muraki A."/>
            <person name="Nakayama S."/>
            <person name="Nakazaki N."/>
            <person name="Naruo K."/>
            <person name="Okumura S."/>
            <person name="Shinpo S."/>
            <person name="Takeuchi C."/>
            <person name="Wada T."/>
            <person name="Watanabe A."/>
            <person name="Yamada M."/>
            <person name="Yasuda M."/>
            <person name="Sato S."/>
            <person name="de la Bastide M."/>
            <person name="Huang E."/>
            <person name="Spiegel L."/>
            <person name="Gnoj L."/>
            <person name="O'Shaughnessy A."/>
            <person name="Preston R."/>
            <person name="Habermann K."/>
            <person name="Murray J."/>
            <person name="Johnson D."/>
            <person name="Rohlfing T."/>
            <person name="Nelson J."/>
            <person name="Stoneking T."/>
            <person name="Pepin K."/>
            <person name="Spieth J."/>
            <person name="Sekhon M."/>
            <person name="Armstrong J."/>
            <person name="Becker M."/>
            <person name="Belter E."/>
            <person name="Cordum H."/>
            <person name="Cordes M."/>
            <person name="Courtney L."/>
            <person name="Courtney W."/>
            <person name="Dante M."/>
            <person name="Du H."/>
            <person name="Edwards J."/>
            <person name="Fryman J."/>
            <person name="Haakensen B."/>
            <person name="Lamar E."/>
            <person name="Latreille P."/>
            <person name="Leonard S."/>
            <person name="Meyer R."/>
            <person name="Mulvaney E."/>
            <person name="Ozersky P."/>
            <person name="Riley A."/>
            <person name="Strowmatt C."/>
            <person name="Wagner-McPherson C."/>
            <person name="Wollam A."/>
            <person name="Yoakum M."/>
            <person name="Bell M."/>
            <person name="Dedhia N."/>
            <person name="Parnell L."/>
            <person name="Shah R."/>
            <person name="Rodriguez M."/>
            <person name="Hoon See L."/>
            <person name="Vil D."/>
            <person name="Baker J."/>
            <person name="Kirchoff K."/>
            <person name="Toth K."/>
            <person name="King L."/>
            <person name="Bahret A."/>
            <person name="Miller B."/>
            <person name="Marra M.A."/>
            <person name="Martienssen R."/>
            <person name="McCombie W.R."/>
            <person name="Wilson R.K."/>
            <person name="Murphy G."/>
            <person name="Bancroft I."/>
            <person name="Volckaert G."/>
            <person name="Wambutt R."/>
            <person name="Duesterhoeft A."/>
            <person name="Stiekema W."/>
            <person name="Pohl T."/>
            <person name="Entian K.-D."/>
            <person name="Terryn N."/>
            <person name="Hartley N."/>
            <person name="Bent E."/>
            <person name="Johnson S."/>
            <person name="Langham S.-A."/>
            <person name="McCullagh B."/>
            <person name="Robben J."/>
            <person name="Grymonprez B."/>
            <person name="Zimmermann W."/>
            <person name="Ramsperger U."/>
            <person name="Wedler H."/>
            <person name="Balke K."/>
            <person name="Wedler E."/>
            <person name="Peters S."/>
            <person name="van Staveren M."/>
            <person name="Dirkse W."/>
            <person name="Mooijman P."/>
            <person name="Klein Lankhorst R."/>
            <person name="Weitzenegger T."/>
            <person name="Bothe G."/>
            <person name="Rose M."/>
            <person name="Hauf J."/>
            <person name="Berneiser S."/>
            <person name="Hempel S."/>
            <person name="Feldpausch M."/>
            <person name="Lamberth S."/>
            <person name="Villarroel R."/>
            <person name="Gielen J."/>
            <person name="Ardiles W."/>
            <person name="Bents O."/>
            <person name="Lemcke K."/>
            <person name="Kolesov G."/>
            <person name="Mayer K.F.X."/>
            <person name="Rudd S."/>
            <person name="Schoof H."/>
            <person name="Schueller C."/>
            <person name="Zaccaria P."/>
            <person name="Mewes H.-W."/>
            <person name="Bevan M."/>
            <person name="Fransz P.F."/>
        </authorList>
    </citation>
    <scope>NUCLEOTIDE SEQUENCE [LARGE SCALE GENOMIC DNA]</scope>
    <source>
        <strain>cv. Columbia</strain>
    </source>
</reference>
<reference key="3">
    <citation type="journal article" date="2017" name="Plant J.">
        <title>Araport11: a complete reannotation of the Arabidopsis thaliana reference genome.</title>
        <authorList>
            <person name="Cheng C.Y."/>
            <person name="Krishnakumar V."/>
            <person name="Chan A.P."/>
            <person name="Thibaud-Nissen F."/>
            <person name="Schobel S."/>
            <person name="Town C.D."/>
        </authorList>
    </citation>
    <scope>GENOME REANNOTATION</scope>
    <source>
        <strain>cv. Columbia</strain>
    </source>
</reference>
<reference key="4">
    <citation type="journal article" date="2003" name="Science">
        <title>Empirical analysis of transcriptional activity in the Arabidopsis genome.</title>
        <authorList>
            <person name="Yamada K."/>
            <person name="Lim J."/>
            <person name="Dale J.M."/>
            <person name="Chen H."/>
            <person name="Shinn P."/>
            <person name="Palm C.J."/>
            <person name="Southwick A.M."/>
            <person name="Wu H.C."/>
            <person name="Kim C.J."/>
            <person name="Nguyen M."/>
            <person name="Pham P.K."/>
            <person name="Cheuk R.F."/>
            <person name="Karlin-Newmann G."/>
            <person name="Liu S.X."/>
            <person name="Lam B."/>
            <person name="Sakano H."/>
            <person name="Wu T."/>
            <person name="Yu G."/>
            <person name="Miranda M."/>
            <person name="Quach H.L."/>
            <person name="Tripp M."/>
            <person name="Chang C.H."/>
            <person name="Lee J.M."/>
            <person name="Toriumi M.J."/>
            <person name="Chan M.M."/>
            <person name="Tang C.C."/>
            <person name="Onodera C.S."/>
            <person name="Deng J.M."/>
            <person name="Akiyama K."/>
            <person name="Ansari Y."/>
            <person name="Arakawa T."/>
            <person name="Banh J."/>
            <person name="Banno F."/>
            <person name="Bowser L."/>
            <person name="Brooks S.Y."/>
            <person name="Carninci P."/>
            <person name="Chao Q."/>
            <person name="Choy N."/>
            <person name="Enju A."/>
            <person name="Goldsmith A.D."/>
            <person name="Gurjal M."/>
            <person name="Hansen N.F."/>
            <person name="Hayashizaki Y."/>
            <person name="Johnson-Hopson C."/>
            <person name="Hsuan V.W."/>
            <person name="Iida K."/>
            <person name="Karnes M."/>
            <person name="Khan S."/>
            <person name="Koesema E."/>
            <person name="Ishida J."/>
            <person name="Jiang P.X."/>
            <person name="Jones T."/>
            <person name="Kawai J."/>
            <person name="Kamiya A."/>
            <person name="Meyers C."/>
            <person name="Nakajima M."/>
            <person name="Narusaka M."/>
            <person name="Seki M."/>
            <person name="Sakurai T."/>
            <person name="Satou M."/>
            <person name="Tamse R."/>
            <person name="Vaysberg M."/>
            <person name="Wallender E.K."/>
            <person name="Wong C."/>
            <person name="Yamamura Y."/>
            <person name="Yuan S."/>
            <person name="Shinozaki K."/>
            <person name="Davis R.W."/>
            <person name="Theologis A."/>
            <person name="Ecker J.R."/>
        </authorList>
    </citation>
    <scope>NUCLEOTIDE SEQUENCE [LARGE SCALE MRNA]</scope>
    <source>
        <strain>cv. Columbia</strain>
    </source>
</reference>
<reference key="5">
    <citation type="journal article" date="2012" name="J. Proteome Res.">
        <title>Identification of phosphoproteins in Arabidopsis thaliana leaves using polyethylene glycol fractionation, immobilized metal-ion affinity chromatography, two-dimensional gel electrophoresis and mass spectrometry.</title>
        <authorList>
            <person name="Aryal U.K."/>
            <person name="Krochko J.E."/>
            <person name="Ross A.R."/>
        </authorList>
    </citation>
    <scope>IDENTIFICATION BY MASS SPECTROMETRY [LARGE SCALE ANALYSIS]</scope>
</reference>
<reference key="6">
    <citation type="journal article" date="2012" name="Mol. Cell. Proteomics">
        <title>Comparative large-scale characterisation of plant vs. mammal proteins reveals similar and idiosyncratic N-alpha acetylation features.</title>
        <authorList>
            <person name="Bienvenut W.V."/>
            <person name="Sumpton D."/>
            <person name="Martinez A."/>
            <person name="Lilla S."/>
            <person name="Espagne C."/>
            <person name="Meinnel T."/>
            <person name="Giglione C."/>
        </authorList>
    </citation>
    <scope>ACETYLATION [LARGE SCALE ANALYSIS] AT ALA-2</scope>
    <scope>CLEAVAGE OF INITIATOR METHIONINE [LARGE SCALE ANALYSIS]</scope>
    <scope>IDENTIFICATION BY MASS SPECTROMETRY [LARGE SCALE ANALYSIS]</scope>
</reference>
<accession>Q9SCX3</accession>